<protein>
    <recommendedName>
        <fullName evidence="1">Peptide deformylase</fullName>
        <shortName evidence="1">PDF</shortName>
        <ecNumber evidence="1">3.5.1.88</ecNumber>
    </recommendedName>
    <alternativeName>
        <fullName evidence="1">Polypeptide deformylase</fullName>
    </alternativeName>
</protein>
<name>DEF_NATTJ</name>
<comment type="function">
    <text evidence="1">Removes the formyl group from the N-terminal Met of newly synthesized proteins. Requires at least a dipeptide for an efficient rate of reaction. N-terminal L-methionine is a prerequisite for activity but the enzyme has broad specificity at other positions.</text>
</comment>
<comment type="catalytic activity">
    <reaction evidence="1">
        <text>N-terminal N-formyl-L-methionyl-[peptide] + H2O = N-terminal L-methionyl-[peptide] + formate</text>
        <dbReference type="Rhea" id="RHEA:24420"/>
        <dbReference type="Rhea" id="RHEA-COMP:10639"/>
        <dbReference type="Rhea" id="RHEA-COMP:10640"/>
        <dbReference type="ChEBI" id="CHEBI:15377"/>
        <dbReference type="ChEBI" id="CHEBI:15740"/>
        <dbReference type="ChEBI" id="CHEBI:49298"/>
        <dbReference type="ChEBI" id="CHEBI:64731"/>
        <dbReference type="EC" id="3.5.1.88"/>
    </reaction>
</comment>
<comment type="cofactor">
    <cofactor evidence="1">
        <name>Fe(2+)</name>
        <dbReference type="ChEBI" id="CHEBI:29033"/>
    </cofactor>
    <text evidence="1">Binds 1 Fe(2+) ion.</text>
</comment>
<comment type="similarity">
    <text evidence="1">Belongs to the polypeptide deformylase family.</text>
</comment>
<feature type="chain" id="PRO_1000097326" description="Peptide deformylase">
    <location>
        <begin position="1"/>
        <end position="156"/>
    </location>
</feature>
<feature type="active site" evidence="1">
    <location>
        <position position="133"/>
    </location>
</feature>
<feature type="binding site" evidence="1">
    <location>
        <position position="90"/>
    </location>
    <ligand>
        <name>Fe cation</name>
        <dbReference type="ChEBI" id="CHEBI:24875"/>
    </ligand>
</feature>
<feature type="binding site" evidence="1">
    <location>
        <position position="132"/>
    </location>
    <ligand>
        <name>Fe cation</name>
        <dbReference type="ChEBI" id="CHEBI:24875"/>
    </ligand>
</feature>
<feature type="binding site" evidence="1">
    <location>
        <position position="136"/>
    </location>
    <ligand>
        <name>Fe cation</name>
        <dbReference type="ChEBI" id="CHEBI:24875"/>
    </ligand>
</feature>
<sequence>MAIKKIRTNDDPVLKRKAKKVTNIDDRLERLLTNMLDTMYEAEGIGLAAPQIGISKRVIVVDIGEDEIYQLINPEIVDTSDEQEKALEGCLSYPGLQGRVTRPVKVTVKALNPQEEEMIIEAEGLLARALQHEIDHLDGITFIDRAEEVFREEESH</sequence>
<evidence type="ECO:0000255" key="1">
    <source>
        <dbReference type="HAMAP-Rule" id="MF_00163"/>
    </source>
</evidence>
<dbReference type="EC" id="3.5.1.88" evidence="1"/>
<dbReference type="EMBL" id="CP001034">
    <property type="protein sequence ID" value="ACB84916.1"/>
    <property type="molecule type" value="Genomic_DNA"/>
</dbReference>
<dbReference type="RefSeq" id="WP_012447791.1">
    <property type="nucleotide sequence ID" value="NC_010718.1"/>
</dbReference>
<dbReference type="SMR" id="B2A2K1"/>
<dbReference type="FunCoup" id="B2A2K1">
    <property type="interactions" value="377"/>
</dbReference>
<dbReference type="STRING" id="457570.Nther_1333"/>
<dbReference type="KEGG" id="nth:Nther_1333"/>
<dbReference type="eggNOG" id="COG0242">
    <property type="taxonomic scope" value="Bacteria"/>
</dbReference>
<dbReference type="HOGENOM" id="CLU_061901_4_2_9"/>
<dbReference type="InParanoid" id="B2A2K1"/>
<dbReference type="OrthoDB" id="9784988at2"/>
<dbReference type="Proteomes" id="UP000001683">
    <property type="component" value="Chromosome"/>
</dbReference>
<dbReference type="GO" id="GO:0046872">
    <property type="term" value="F:metal ion binding"/>
    <property type="evidence" value="ECO:0007669"/>
    <property type="project" value="UniProtKB-KW"/>
</dbReference>
<dbReference type="GO" id="GO:0042586">
    <property type="term" value="F:peptide deformylase activity"/>
    <property type="evidence" value="ECO:0007669"/>
    <property type="project" value="UniProtKB-UniRule"/>
</dbReference>
<dbReference type="GO" id="GO:0043686">
    <property type="term" value="P:co-translational protein modification"/>
    <property type="evidence" value="ECO:0007669"/>
    <property type="project" value="TreeGrafter"/>
</dbReference>
<dbReference type="GO" id="GO:0006412">
    <property type="term" value="P:translation"/>
    <property type="evidence" value="ECO:0007669"/>
    <property type="project" value="UniProtKB-UniRule"/>
</dbReference>
<dbReference type="CDD" id="cd00487">
    <property type="entry name" value="Pep_deformylase"/>
    <property type="match status" value="1"/>
</dbReference>
<dbReference type="FunFam" id="3.90.45.10:FF:000005">
    <property type="entry name" value="Peptide deformylase"/>
    <property type="match status" value="1"/>
</dbReference>
<dbReference type="Gene3D" id="3.90.45.10">
    <property type="entry name" value="Peptide deformylase"/>
    <property type="match status" value="1"/>
</dbReference>
<dbReference type="HAMAP" id="MF_00163">
    <property type="entry name" value="Pep_deformylase"/>
    <property type="match status" value="1"/>
</dbReference>
<dbReference type="InterPro" id="IPR023635">
    <property type="entry name" value="Peptide_deformylase"/>
</dbReference>
<dbReference type="InterPro" id="IPR036821">
    <property type="entry name" value="Peptide_deformylase_sf"/>
</dbReference>
<dbReference type="NCBIfam" id="TIGR00079">
    <property type="entry name" value="pept_deformyl"/>
    <property type="match status" value="1"/>
</dbReference>
<dbReference type="NCBIfam" id="NF001159">
    <property type="entry name" value="PRK00150.1-3"/>
    <property type="match status" value="1"/>
</dbReference>
<dbReference type="PANTHER" id="PTHR10458">
    <property type="entry name" value="PEPTIDE DEFORMYLASE"/>
    <property type="match status" value="1"/>
</dbReference>
<dbReference type="PANTHER" id="PTHR10458:SF22">
    <property type="entry name" value="PEPTIDE DEFORMYLASE"/>
    <property type="match status" value="1"/>
</dbReference>
<dbReference type="Pfam" id="PF01327">
    <property type="entry name" value="Pep_deformylase"/>
    <property type="match status" value="1"/>
</dbReference>
<dbReference type="PIRSF" id="PIRSF004749">
    <property type="entry name" value="Pep_def"/>
    <property type="match status" value="1"/>
</dbReference>
<dbReference type="PRINTS" id="PR01576">
    <property type="entry name" value="PDEFORMYLASE"/>
</dbReference>
<dbReference type="SUPFAM" id="SSF56420">
    <property type="entry name" value="Peptide deformylase"/>
    <property type="match status" value="1"/>
</dbReference>
<accession>B2A2K1</accession>
<reference key="1">
    <citation type="submission" date="2008-04" db="EMBL/GenBank/DDBJ databases">
        <title>Complete sequence of chromosome of Natranaerobius thermophilus JW/NM-WN-LF.</title>
        <authorList>
            <consortium name="US DOE Joint Genome Institute"/>
            <person name="Copeland A."/>
            <person name="Lucas S."/>
            <person name="Lapidus A."/>
            <person name="Glavina del Rio T."/>
            <person name="Dalin E."/>
            <person name="Tice H."/>
            <person name="Bruce D."/>
            <person name="Goodwin L."/>
            <person name="Pitluck S."/>
            <person name="Chertkov O."/>
            <person name="Brettin T."/>
            <person name="Detter J.C."/>
            <person name="Han C."/>
            <person name="Kuske C.R."/>
            <person name="Schmutz J."/>
            <person name="Larimer F."/>
            <person name="Land M."/>
            <person name="Hauser L."/>
            <person name="Kyrpides N."/>
            <person name="Lykidis A."/>
            <person name="Mesbah N.M."/>
            <person name="Wiegel J."/>
        </authorList>
    </citation>
    <scope>NUCLEOTIDE SEQUENCE [LARGE SCALE GENOMIC DNA]</scope>
    <source>
        <strain>ATCC BAA-1301 / DSM 18059 / JW/NM-WN-LF</strain>
    </source>
</reference>
<proteinExistence type="inferred from homology"/>
<keyword id="KW-0378">Hydrolase</keyword>
<keyword id="KW-0408">Iron</keyword>
<keyword id="KW-0479">Metal-binding</keyword>
<keyword id="KW-0648">Protein biosynthesis</keyword>
<keyword id="KW-1185">Reference proteome</keyword>
<organism>
    <name type="scientific">Natranaerobius thermophilus (strain ATCC BAA-1301 / DSM 18059 / JW/NM-WN-LF)</name>
    <dbReference type="NCBI Taxonomy" id="457570"/>
    <lineage>
        <taxon>Bacteria</taxon>
        <taxon>Bacillati</taxon>
        <taxon>Bacillota</taxon>
        <taxon>Clostridia</taxon>
        <taxon>Natranaerobiales</taxon>
        <taxon>Natranaerobiaceae</taxon>
        <taxon>Natranaerobius</taxon>
    </lineage>
</organism>
<gene>
    <name evidence="1" type="primary">def</name>
    <name type="ordered locus">Nther_1333</name>
</gene>